<sequence>MAQKDVLTDLNKVRNIGIMAHIDAGKTTTTERILYYTGVNYKIGETHDGASTTDWMEQEQERGITITSAAVTCFWNDNQINIIDTPGHVDFTVEVERSLRVLDGAVAVFDGKEGVEPQSEQVWRQADKYDVPRICFVNKMDKLGADFYFTVRTIEERLGATPLVIQLPIGAENDFIGIIDLVEMKAKVWRGETALGEKYEVEDIPAELADKADEYRTKLLEAVAETDEALLEKYFGGEELTVEEIKGAIRKLTVNSELYPVLCGSAFKNKGVQPMLDAVVDYLPSPLDVESVQGHVPNKEDELITRKPSVDEPFSALAFKIAVHPFFGKLTYVRVYSGTVESGSQVINSTKGKKERLGKLFQMHANKENPVERASAGHIYAVIGLKDTTTGDTLSDANQQIVLESMTFPDPVIEVAIEPKTKSDQEKLGTAIQKLAEEDPTFKVHLDQETGQTVIGGMGELHLDILVDRMRREFKVEANVGKPQVAYRETIKRKVEKVEFTHKKQTGGSGQFAKVLIDLEPFSGEDGATYEFENKVTGGRIPREYIPSVDAGAQDAMQYGVLAGYPLVNVKVTLLDGAYHEVDSSEMAFKVAGSQVLKKAAQAAQPVILEPIMAVEVTTPEDYMGEVIGDLNSRRGQIQAMEERAGARVVKAQVPLSEMFGYVGDLRSKTQGRANYSMVFDSYAEVPANVSKEIIAKATGQ</sequence>
<name>EFG_MYCSK</name>
<keyword id="KW-0963">Cytoplasm</keyword>
<keyword id="KW-0251">Elongation factor</keyword>
<keyword id="KW-0342">GTP-binding</keyword>
<keyword id="KW-0547">Nucleotide-binding</keyword>
<keyword id="KW-0648">Protein biosynthesis</keyword>
<feature type="chain" id="PRO_1000008855" description="Elongation factor G">
    <location>
        <begin position="1"/>
        <end position="701"/>
    </location>
</feature>
<feature type="domain" description="tr-type G">
    <location>
        <begin position="11"/>
        <end position="287"/>
    </location>
</feature>
<feature type="binding site" evidence="1">
    <location>
        <begin position="20"/>
        <end position="27"/>
    </location>
    <ligand>
        <name>GTP</name>
        <dbReference type="ChEBI" id="CHEBI:37565"/>
    </ligand>
</feature>
<feature type="binding site" evidence="1">
    <location>
        <begin position="84"/>
        <end position="88"/>
    </location>
    <ligand>
        <name>GTP</name>
        <dbReference type="ChEBI" id="CHEBI:37565"/>
    </ligand>
</feature>
<feature type="binding site" evidence="1">
    <location>
        <begin position="138"/>
        <end position="141"/>
    </location>
    <ligand>
        <name>GTP</name>
        <dbReference type="ChEBI" id="CHEBI:37565"/>
    </ligand>
</feature>
<protein>
    <recommendedName>
        <fullName evidence="1">Elongation factor G</fullName>
        <shortName evidence="1">EF-G</shortName>
    </recommendedName>
</protein>
<comment type="function">
    <text evidence="1">Catalyzes the GTP-dependent ribosomal translocation step during translation elongation. During this step, the ribosome changes from the pre-translocational (PRE) to the post-translocational (POST) state as the newly formed A-site-bound peptidyl-tRNA and P-site-bound deacylated tRNA move to the P and E sites, respectively. Catalyzes the coordinated movement of the two tRNA molecules, the mRNA and conformational changes in the ribosome.</text>
</comment>
<comment type="subcellular location">
    <subcellularLocation>
        <location evidence="1">Cytoplasm</location>
    </subcellularLocation>
</comment>
<comment type="similarity">
    <text evidence="1">Belongs to the TRAFAC class translation factor GTPase superfamily. Classic translation factor GTPase family. EF-G/EF-2 subfamily.</text>
</comment>
<evidence type="ECO:0000255" key="1">
    <source>
        <dbReference type="HAMAP-Rule" id="MF_00054"/>
    </source>
</evidence>
<organism>
    <name type="scientific">Mycobacterium sp. (strain KMS)</name>
    <dbReference type="NCBI Taxonomy" id="189918"/>
    <lineage>
        <taxon>Bacteria</taxon>
        <taxon>Bacillati</taxon>
        <taxon>Actinomycetota</taxon>
        <taxon>Actinomycetes</taxon>
        <taxon>Mycobacteriales</taxon>
        <taxon>Mycobacteriaceae</taxon>
        <taxon>Mycobacterium</taxon>
    </lineage>
</organism>
<reference key="1">
    <citation type="submission" date="2006-12" db="EMBL/GenBank/DDBJ databases">
        <title>Complete sequence of chromosome of Mycobacterium sp. KMS.</title>
        <authorList>
            <consortium name="US DOE Joint Genome Institute"/>
            <person name="Copeland A."/>
            <person name="Lucas S."/>
            <person name="Lapidus A."/>
            <person name="Barry K."/>
            <person name="Detter J.C."/>
            <person name="Glavina del Rio T."/>
            <person name="Hammon N."/>
            <person name="Israni S."/>
            <person name="Dalin E."/>
            <person name="Tice H."/>
            <person name="Pitluck S."/>
            <person name="Kiss H."/>
            <person name="Brettin T."/>
            <person name="Bruce D."/>
            <person name="Han C."/>
            <person name="Tapia R."/>
            <person name="Gilna P."/>
            <person name="Schmutz J."/>
            <person name="Larimer F."/>
            <person name="Land M."/>
            <person name="Hauser L."/>
            <person name="Kyrpides N."/>
            <person name="Mikhailova N."/>
            <person name="Miller C.D."/>
            <person name="Richardson P."/>
        </authorList>
    </citation>
    <scope>NUCLEOTIDE SEQUENCE [LARGE SCALE GENOMIC DNA]</scope>
    <source>
        <strain>KMS</strain>
    </source>
</reference>
<proteinExistence type="inferred from homology"/>
<gene>
    <name evidence="1" type="primary">fusA</name>
    <name type="ordered locus">Mkms_1004</name>
</gene>
<dbReference type="EMBL" id="CP000518">
    <property type="protein sequence ID" value="ABL90218.1"/>
    <property type="molecule type" value="Genomic_DNA"/>
</dbReference>
<dbReference type="SMR" id="A1UBL0"/>
<dbReference type="STRING" id="189918.Mkms_1004"/>
<dbReference type="KEGG" id="mkm:Mkms_1004"/>
<dbReference type="HOGENOM" id="CLU_002794_4_1_11"/>
<dbReference type="OrthoDB" id="9801472at2"/>
<dbReference type="GO" id="GO:0005737">
    <property type="term" value="C:cytoplasm"/>
    <property type="evidence" value="ECO:0007669"/>
    <property type="project" value="UniProtKB-SubCell"/>
</dbReference>
<dbReference type="GO" id="GO:0005525">
    <property type="term" value="F:GTP binding"/>
    <property type="evidence" value="ECO:0007669"/>
    <property type="project" value="UniProtKB-UniRule"/>
</dbReference>
<dbReference type="GO" id="GO:0003924">
    <property type="term" value="F:GTPase activity"/>
    <property type="evidence" value="ECO:0007669"/>
    <property type="project" value="InterPro"/>
</dbReference>
<dbReference type="GO" id="GO:0003746">
    <property type="term" value="F:translation elongation factor activity"/>
    <property type="evidence" value="ECO:0007669"/>
    <property type="project" value="UniProtKB-UniRule"/>
</dbReference>
<dbReference type="GO" id="GO:0032790">
    <property type="term" value="P:ribosome disassembly"/>
    <property type="evidence" value="ECO:0007669"/>
    <property type="project" value="TreeGrafter"/>
</dbReference>
<dbReference type="CDD" id="cd01886">
    <property type="entry name" value="EF-G"/>
    <property type="match status" value="1"/>
</dbReference>
<dbReference type="CDD" id="cd16262">
    <property type="entry name" value="EFG_III"/>
    <property type="match status" value="1"/>
</dbReference>
<dbReference type="CDD" id="cd01434">
    <property type="entry name" value="EFG_mtEFG1_IV"/>
    <property type="match status" value="1"/>
</dbReference>
<dbReference type="CDD" id="cd03713">
    <property type="entry name" value="EFG_mtEFG_C"/>
    <property type="match status" value="1"/>
</dbReference>
<dbReference type="CDD" id="cd04088">
    <property type="entry name" value="EFG_mtEFG_II"/>
    <property type="match status" value="1"/>
</dbReference>
<dbReference type="FunFam" id="2.40.30.10:FF:000006">
    <property type="entry name" value="Elongation factor G"/>
    <property type="match status" value="1"/>
</dbReference>
<dbReference type="FunFam" id="3.30.230.10:FF:000003">
    <property type="entry name" value="Elongation factor G"/>
    <property type="match status" value="1"/>
</dbReference>
<dbReference type="FunFam" id="3.30.70.240:FF:000001">
    <property type="entry name" value="Elongation factor G"/>
    <property type="match status" value="1"/>
</dbReference>
<dbReference type="FunFam" id="3.30.70.870:FF:000001">
    <property type="entry name" value="Elongation factor G"/>
    <property type="match status" value="1"/>
</dbReference>
<dbReference type="FunFam" id="3.40.50.300:FF:000029">
    <property type="entry name" value="Elongation factor G"/>
    <property type="match status" value="1"/>
</dbReference>
<dbReference type="Gene3D" id="3.30.230.10">
    <property type="match status" value="1"/>
</dbReference>
<dbReference type="Gene3D" id="3.30.70.240">
    <property type="match status" value="1"/>
</dbReference>
<dbReference type="Gene3D" id="3.30.70.870">
    <property type="entry name" value="Elongation Factor G (Translational Gtpase), domain 3"/>
    <property type="match status" value="1"/>
</dbReference>
<dbReference type="Gene3D" id="3.40.50.300">
    <property type="entry name" value="P-loop containing nucleotide triphosphate hydrolases"/>
    <property type="match status" value="1"/>
</dbReference>
<dbReference type="Gene3D" id="2.40.30.10">
    <property type="entry name" value="Translation factors"/>
    <property type="match status" value="1"/>
</dbReference>
<dbReference type="HAMAP" id="MF_00054_B">
    <property type="entry name" value="EF_G_EF_2_B"/>
    <property type="match status" value="1"/>
</dbReference>
<dbReference type="InterPro" id="IPR041095">
    <property type="entry name" value="EFG_II"/>
</dbReference>
<dbReference type="InterPro" id="IPR009022">
    <property type="entry name" value="EFG_III"/>
</dbReference>
<dbReference type="InterPro" id="IPR035647">
    <property type="entry name" value="EFG_III/V"/>
</dbReference>
<dbReference type="InterPro" id="IPR047872">
    <property type="entry name" value="EFG_IV"/>
</dbReference>
<dbReference type="InterPro" id="IPR035649">
    <property type="entry name" value="EFG_V"/>
</dbReference>
<dbReference type="InterPro" id="IPR000640">
    <property type="entry name" value="EFG_V-like"/>
</dbReference>
<dbReference type="InterPro" id="IPR004161">
    <property type="entry name" value="EFTu-like_2"/>
</dbReference>
<dbReference type="InterPro" id="IPR031157">
    <property type="entry name" value="G_TR_CS"/>
</dbReference>
<dbReference type="InterPro" id="IPR027417">
    <property type="entry name" value="P-loop_NTPase"/>
</dbReference>
<dbReference type="InterPro" id="IPR020568">
    <property type="entry name" value="Ribosomal_Su5_D2-typ_SF"/>
</dbReference>
<dbReference type="InterPro" id="IPR014721">
    <property type="entry name" value="Ribsml_uS5_D2-typ_fold_subgr"/>
</dbReference>
<dbReference type="InterPro" id="IPR005225">
    <property type="entry name" value="Small_GTP-bd"/>
</dbReference>
<dbReference type="InterPro" id="IPR000795">
    <property type="entry name" value="T_Tr_GTP-bd_dom"/>
</dbReference>
<dbReference type="InterPro" id="IPR009000">
    <property type="entry name" value="Transl_B-barrel_sf"/>
</dbReference>
<dbReference type="InterPro" id="IPR004540">
    <property type="entry name" value="Transl_elong_EFG/EF2"/>
</dbReference>
<dbReference type="InterPro" id="IPR005517">
    <property type="entry name" value="Transl_elong_EFG/EF2_IV"/>
</dbReference>
<dbReference type="NCBIfam" id="TIGR00484">
    <property type="entry name" value="EF-G"/>
    <property type="match status" value="1"/>
</dbReference>
<dbReference type="NCBIfam" id="NF009381">
    <property type="entry name" value="PRK12740.1-5"/>
    <property type="match status" value="1"/>
</dbReference>
<dbReference type="NCBIfam" id="TIGR00231">
    <property type="entry name" value="small_GTP"/>
    <property type="match status" value="1"/>
</dbReference>
<dbReference type="PANTHER" id="PTHR43261:SF1">
    <property type="entry name" value="RIBOSOME-RELEASING FACTOR 2, MITOCHONDRIAL"/>
    <property type="match status" value="1"/>
</dbReference>
<dbReference type="PANTHER" id="PTHR43261">
    <property type="entry name" value="TRANSLATION ELONGATION FACTOR G-RELATED"/>
    <property type="match status" value="1"/>
</dbReference>
<dbReference type="Pfam" id="PF00679">
    <property type="entry name" value="EFG_C"/>
    <property type="match status" value="1"/>
</dbReference>
<dbReference type="Pfam" id="PF14492">
    <property type="entry name" value="EFG_III"/>
    <property type="match status" value="1"/>
</dbReference>
<dbReference type="Pfam" id="PF03764">
    <property type="entry name" value="EFG_IV"/>
    <property type="match status" value="1"/>
</dbReference>
<dbReference type="Pfam" id="PF00009">
    <property type="entry name" value="GTP_EFTU"/>
    <property type="match status" value="1"/>
</dbReference>
<dbReference type="Pfam" id="PF03144">
    <property type="entry name" value="GTP_EFTU_D2"/>
    <property type="match status" value="1"/>
</dbReference>
<dbReference type="PRINTS" id="PR00315">
    <property type="entry name" value="ELONGATNFCT"/>
</dbReference>
<dbReference type="SMART" id="SM00838">
    <property type="entry name" value="EFG_C"/>
    <property type="match status" value="1"/>
</dbReference>
<dbReference type="SMART" id="SM00889">
    <property type="entry name" value="EFG_IV"/>
    <property type="match status" value="1"/>
</dbReference>
<dbReference type="SUPFAM" id="SSF54980">
    <property type="entry name" value="EF-G C-terminal domain-like"/>
    <property type="match status" value="2"/>
</dbReference>
<dbReference type="SUPFAM" id="SSF52540">
    <property type="entry name" value="P-loop containing nucleoside triphosphate hydrolases"/>
    <property type="match status" value="1"/>
</dbReference>
<dbReference type="SUPFAM" id="SSF54211">
    <property type="entry name" value="Ribosomal protein S5 domain 2-like"/>
    <property type="match status" value="1"/>
</dbReference>
<dbReference type="SUPFAM" id="SSF50447">
    <property type="entry name" value="Translation proteins"/>
    <property type="match status" value="1"/>
</dbReference>
<dbReference type="PROSITE" id="PS00301">
    <property type="entry name" value="G_TR_1"/>
    <property type="match status" value="1"/>
</dbReference>
<dbReference type="PROSITE" id="PS51722">
    <property type="entry name" value="G_TR_2"/>
    <property type="match status" value="1"/>
</dbReference>
<accession>A1UBL0</accession>